<feature type="chain" id="PRO_1000023507" description="3-dehydroquinate dehydratase">
    <location>
        <begin position="1"/>
        <end position="147"/>
    </location>
</feature>
<feature type="active site" description="Proton acceptor" evidence="1">
    <location>
        <position position="24"/>
    </location>
</feature>
<feature type="active site" description="Proton donor" evidence="1">
    <location>
        <position position="101"/>
    </location>
</feature>
<feature type="binding site" evidence="1">
    <location>
        <position position="75"/>
    </location>
    <ligand>
        <name>substrate</name>
    </ligand>
</feature>
<feature type="binding site" evidence="1">
    <location>
        <position position="81"/>
    </location>
    <ligand>
        <name>substrate</name>
    </ligand>
</feature>
<feature type="binding site" evidence="1">
    <location>
        <position position="88"/>
    </location>
    <ligand>
        <name>substrate</name>
    </ligand>
</feature>
<feature type="binding site" evidence="1">
    <location>
        <begin position="102"/>
        <end position="103"/>
    </location>
    <ligand>
        <name>substrate</name>
    </ligand>
</feature>
<feature type="binding site" evidence="1">
    <location>
        <position position="112"/>
    </location>
    <ligand>
        <name>substrate</name>
    </ligand>
</feature>
<feature type="site" description="Transition state stabilizer" evidence="1">
    <location>
        <position position="19"/>
    </location>
</feature>
<protein>
    <recommendedName>
        <fullName evidence="1">3-dehydroquinate dehydratase</fullName>
        <shortName evidence="1">3-dehydroquinase</shortName>
        <ecNumber evidence="1">4.2.1.10</ecNumber>
    </recommendedName>
    <alternativeName>
        <fullName evidence="1">Type II DHQase</fullName>
    </alternativeName>
</protein>
<comment type="function">
    <text evidence="1">Catalyzes a trans-dehydration via an enolate intermediate.</text>
</comment>
<comment type="catalytic activity">
    <reaction evidence="1">
        <text>3-dehydroquinate = 3-dehydroshikimate + H2O</text>
        <dbReference type="Rhea" id="RHEA:21096"/>
        <dbReference type="ChEBI" id="CHEBI:15377"/>
        <dbReference type="ChEBI" id="CHEBI:16630"/>
        <dbReference type="ChEBI" id="CHEBI:32364"/>
        <dbReference type="EC" id="4.2.1.10"/>
    </reaction>
</comment>
<comment type="pathway">
    <text evidence="1">Metabolic intermediate biosynthesis; chorismate biosynthesis; chorismate from D-erythrose 4-phosphate and phosphoenolpyruvate: step 3/7.</text>
</comment>
<comment type="subunit">
    <text evidence="1">Homododecamer.</text>
</comment>
<comment type="similarity">
    <text evidence="1">Belongs to the type-II 3-dehydroquinase family.</text>
</comment>
<reference key="1">
    <citation type="submission" date="2005-09" db="EMBL/GenBank/DDBJ databases">
        <title>Complete sequence of chromosome 2 of Rhodobacter sphaeroides 2.4.1.</title>
        <authorList>
            <person name="Copeland A."/>
            <person name="Lucas S."/>
            <person name="Lapidus A."/>
            <person name="Barry K."/>
            <person name="Detter J.C."/>
            <person name="Glavina T."/>
            <person name="Hammon N."/>
            <person name="Israni S."/>
            <person name="Pitluck S."/>
            <person name="Richardson P."/>
            <person name="Mackenzie C."/>
            <person name="Choudhary M."/>
            <person name="Larimer F."/>
            <person name="Hauser L.J."/>
            <person name="Land M."/>
            <person name="Donohue T.J."/>
            <person name="Kaplan S."/>
        </authorList>
    </citation>
    <scope>NUCLEOTIDE SEQUENCE [LARGE SCALE GENOMIC DNA]</scope>
    <source>
        <strain>ATCC 17023 / DSM 158 / JCM 6121 / CCUG 31486 / LMG 2827 / NBRC 12203 / NCIMB 8253 / ATH 2.4.1.</strain>
    </source>
</reference>
<evidence type="ECO:0000255" key="1">
    <source>
        <dbReference type="HAMAP-Rule" id="MF_00169"/>
    </source>
</evidence>
<proteinExistence type="inferred from homology"/>
<sequence>MTTTIYILNGPNLNLLGQRQPEIYGHETLADVERRCAAVAAEKGFSVRLFQSNHEGAIVDQIHEARQAACGIVINPAAYTHTSVAILDALNAFEGPVIECHISNVHKRESFRHHSYVSLRADGVLAGFGIEGYELAVRRICSLCAGG</sequence>
<accession>Q3IWV4</accession>
<keyword id="KW-0028">Amino-acid biosynthesis</keyword>
<keyword id="KW-0057">Aromatic amino acid biosynthesis</keyword>
<keyword id="KW-0456">Lyase</keyword>
<keyword id="KW-1185">Reference proteome</keyword>
<gene>
    <name evidence="1" type="primary">aroQ</name>
    <name type="ordered locus">RHOS4_34120</name>
    <name type="ORF">RSP_3376</name>
</gene>
<organism>
    <name type="scientific">Cereibacter sphaeroides (strain ATCC 17023 / DSM 158 / JCM 6121 / CCUG 31486 / LMG 2827 / NBRC 12203 / NCIMB 8253 / ATH 2.4.1.)</name>
    <name type="common">Rhodobacter sphaeroides</name>
    <dbReference type="NCBI Taxonomy" id="272943"/>
    <lineage>
        <taxon>Bacteria</taxon>
        <taxon>Pseudomonadati</taxon>
        <taxon>Pseudomonadota</taxon>
        <taxon>Alphaproteobacteria</taxon>
        <taxon>Rhodobacterales</taxon>
        <taxon>Paracoccaceae</taxon>
        <taxon>Cereibacter</taxon>
    </lineage>
</organism>
<name>AROQ_CERS4</name>
<dbReference type="EC" id="4.2.1.10" evidence="1"/>
<dbReference type="EMBL" id="CP000144">
    <property type="protein sequence ID" value="ABA80980.1"/>
    <property type="molecule type" value="Genomic_DNA"/>
</dbReference>
<dbReference type="RefSeq" id="WP_011339256.1">
    <property type="nucleotide sequence ID" value="NC_007494.2"/>
</dbReference>
<dbReference type="RefSeq" id="YP_354881.1">
    <property type="nucleotide sequence ID" value="NC_007494.2"/>
</dbReference>
<dbReference type="SMR" id="Q3IWV4"/>
<dbReference type="STRING" id="272943.RSP_3376"/>
<dbReference type="EnsemblBacteria" id="ABA80980">
    <property type="protein sequence ID" value="ABA80980"/>
    <property type="gene ID" value="RSP_3376"/>
</dbReference>
<dbReference type="GeneID" id="3722078"/>
<dbReference type="KEGG" id="rsp:RSP_3376"/>
<dbReference type="PATRIC" id="fig|272943.9.peg.3813"/>
<dbReference type="eggNOG" id="COG0757">
    <property type="taxonomic scope" value="Bacteria"/>
</dbReference>
<dbReference type="OrthoDB" id="9790793at2"/>
<dbReference type="PhylomeDB" id="Q3IWV4"/>
<dbReference type="UniPathway" id="UPA00053">
    <property type="reaction ID" value="UER00086"/>
</dbReference>
<dbReference type="Proteomes" id="UP000002703">
    <property type="component" value="Chromosome 2"/>
</dbReference>
<dbReference type="GO" id="GO:0003855">
    <property type="term" value="F:3-dehydroquinate dehydratase activity"/>
    <property type="evidence" value="ECO:0007669"/>
    <property type="project" value="UniProtKB-UniRule"/>
</dbReference>
<dbReference type="GO" id="GO:0008652">
    <property type="term" value="P:amino acid biosynthetic process"/>
    <property type="evidence" value="ECO:0007669"/>
    <property type="project" value="UniProtKB-KW"/>
</dbReference>
<dbReference type="GO" id="GO:0009073">
    <property type="term" value="P:aromatic amino acid family biosynthetic process"/>
    <property type="evidence" value="ECO:0007669"/>
    <property type="project" value="UniProtKB-KW"/>
</dbReference>
<dbReference type="GO" id="GO:0009423">
    <property type="term" value="P:chorismate biosynthetic process"/>
    <property type="evidence" value="ECO:0007669"/>
    <property type="project" value="UniProtKB-UniRule"/>
</dbReference>
<dbReference type="GO" id="GO:0019631">
    <property type="term" value="P:quinate catabolic process"/>
    <property type="evidence" value="ECO:0007669"/>
    <property type="project" value="TreeGrafter"/>
</dbReference>
<dbReference type="CDD" id="cd00466">
    <property type="entry name" value="DHQase_II"/>
    <property type="match status" value="1"/>
</dbReference>
<dbReference type="Gene3D" id="3.40.50.9100">
    <property type="entry name" value="Dehydroquinase, class II"/>
    <property type="match status" value="1"/>
</dbReference>
<dbReference type="HAMAP" id="MF_00169">
    <property type="entry name" value="AroQ"/>
    <property type="match status" value="1"/>
</dbReference>
<dbReference type="InterPro" id="IPR001874">
    <property type="entry name" value="DHquinase_II"/>
</dbReference>
<dbReference type="InterPro" id="IPR018509">
    <property type="entry name" value="DHquinase_II_CS"/>
</dbReference>
<dbReference type="InterPro" id="IPR036441">
    <property type="entry name" value="DHquinase_II_sf"/>
</dbReference>
<dbReference type="NCBIfam" id="TIGR01088">
    <property type="entry name" value="aroQ"/>
    <property type="match status" value="1"/>
</dbReference>
<dbReference type="NCBIfam" id="NF003805">
    <property type="entry name" value="PRK05395.1-2"/>
    <property type="match status" value="1"/>
</dbReference>
<dbReference type="NCBIfam" id="NF003806">
    <property type="entry name" value="PRK05395.1-3"/>
    <property type="match status" value="1"/>
</dbReference>
<dbReference type="NCBIfam" id="NF003807">
    <property type="entry name" value="PRK05395.1-4"/>
    <property type="match status" value="1"/>
</dbReference>
<dbReference type="PANTHER" id="PTHR21272">
    <property type="entry name" value="CATABOLIC 3-DEHYDROQUINASE"/>
    <property type="match status" value="1"/>
</dbReference>
<dbReference type="PANTHER" id="PTHR21272:SF3">
    <property type="entry name" value="CATABOLIC 3-DEHYDROQUINASE"/>
    <property type="match status" value="1"/>
</dbReference>
<dbReference type="Pfam" id="PF01220">
    <property type="entry name" value="DHquinase_II"/>
    <property type="match status" value="1"/>
</dbReference>
<dbReference type="PIRSF" id="PIRSF001399">
    <property type="entry name" value="DHquinase_II"/>
    <property type="match status" value="1"/>
</dbReference>
<dbReference type="SUPFAM" id="SSF52304">
    <property type="entry name" value="Type II 3-dehydroquinate dehydratase"/>
    <property type="match status" value="1"/>
</dbReference>
<dbReference type="PROSITE" id="PS01029">
    <property type="entry name" value="DEHYDROQUINASE_II"/>
    <property type="match status" value="1"/>
</dbReference>